<comment type="function">
    <text evidence="1">Catalyzes the dephosphorylation of undecaprenyl diphosphate (UPP). Confers resistance to bacitracin.</text>
</comment>
<comment type="catalytic activity">
    <reaction evidence="1">
        <text>di-trans,octa-cis-undecaprenyl diphosphate + H2O = di-trans,octa-cis-undecaprenyl phosphate + phosphate + H(+)</text>
        <dbReference type="Rhea" id="RHEA:28094"/>
        <dbReference type="ChEBI" id="CHEBI:15377"/>
        <dbReference type="ChEBI" id="CHEBI:15378"/>
        <dbReference type="ChEBI" id="CHEBI:43474"/>
        <dbReference type="ChEBI" id="CHEBI:58405"/>
        <dbReference type="ChEBI" id="CHEBI:60392"/>
        <dbReference type="EC" id="3.6.1.27"/>
    </reaction>
</comment>
<comment type="subcellular location">
    <subcellularLocation>
        <location evidence="1">Cell membrane</location>
        <topology evidence="1">Multi-pass membrane protein</topology>
    </subcellularLocation>
</comment>
<comment type="miscellaneous">
    <text>Bacitracin is thought to be involved in the inhibition of peptidoglycan synthesis by sequestering undecaprenyl diphosphate, thereby reducing the pool of lipid carrier available.</text>
</comment>
<comment type="similarity">
    <text evidence="1">Belongs to the UppP family.</text>
</comment>
<comment type="sequence caution" evidence="2">
    <conflict type="erroneous initiation">
        <sequence resource="EMBL-CDS" id="AAT30499"/>
    </conflict>
    <text>Truncated N-terminus.</text>
</comment>
<gene>
    <name evidence="1" type="primary">uppP2</name>
    <name type="synonym">bacA-2</name>
    <name type="synonym">bacA2</name>
    <name type="synonym">upk2</name>
    <name type="ordered locus">BA_1403</name>
    <name type="ordered locus">GBAA_1403</name>
    <name type="ordered locus">BAS1296</name>
</gene>
<dbReference type="EC" id="3.6.1.27" evidence="1"/>
<dbReference type="EMBL" id="AE016879">
    <property type="protein sequence ID" value="AAP25346.2"/>
    <property type="molecule type" value="Genomic_DNA"/>
</dbReference>
<dbReference type="EMBL" id="AE017334">
    <property type="protein sequence ID" value="AAT30499.1"/>
    <property type="status" value="ALT_INIT"/>
    <property type="molecule type" value="Genomic_DNA"/>
</dbReference>
<dbReference type="EMBL" id="AE017225">
    <property type="protein sequence ID" value="AAT53616.1"/>
    <property type="molecule type" value="Genomic_DNA"/>
</dbReference>
<dbReference type="RefSeq" id="NP_843860.2">
    <property type="nucleotide sequence ID" value="NC_003997.3"/>
</dbReference>
<dbReference type="RefSeq" id="WP_000796236.1">
    <property type="nucleotide sequence ID" value="NZ_WXXJ01000001.1"/>
</dbReference>
<dbReference type="RefSeq" id="YP_027565.1">
    <property type="nucleotide sequence ID" value="NC_005945.1"/>
</dbReference>
<dbReference type="SMR" id="Q81T84"/>
<dbReference type="STRING" id="261594.GBAA_1403"/>
<dbReference type="DNASU" id="1087239"/>
<dbReference type="GeneID" id="45021382"/>
<dbReference type="KEGG" id="ban:BA_1403"/>
<dbReference type="KEGG" id="bar:GBAA_1403"/>
<dbReference type="KEGG" id="bat:BAS1296"/>
<dbReference type="PATRIC" id="fig|198094.11.peg.1376"/>
<dbReference type="eggNOG" id="COG1968">
    <property type="taxonomic scope" value="Bacteria"/>
</dbReference>
<dbReference type="HOGENOM" id="CLU_060296_2_0_9"/>
<dbReference type="OMA" id="DSITFTQ"/>
<dbReference type="OrthoDB" id="9808289at2"/>
<dbReference type="Proteomes" id="UP000000427">
    <property type="component" value="Chromosome"/>
</dbReference>
<dbReference type="Proteomes" id="UP000000594">
    <property type="component" value="Chromosome"/>
</dbReference>
<dbReference type="GO" id="GO:0005886">
    <property type="term" value="C:plasma membrane"/>
    <property type="evidence" value="ECO:0007669"/>
    <property type="project" value="UniProtKB-SubCell"/>
</dbReference>
<dbReference type="GO" id="GO:0050380">
    <property type="term" value="F:undecaprenyl-diphosphatase activity"/>
    <property type="evidence" value="ECO:0007669"/>
    <property type="project" value="UniProtKB-UniRule"/>
</dbReference>
<dbReference type="GO" id="GO:0071555">
    <property type="term" value="P:cell wall organization"/>
    <property type="evidence" value="ECO:0007669"/>
    <property type="project" value="UniProtKB-KW"/>
</dbReference>
<dbReference type="GO" id="GO:0009252">
    <property type="term" value="P:peptidoglycan biosynthetic process"/>
    <property type="evidence" value="ECO:0007669"/>
    <property type="project" value="UniProtKB-KW"/>
</dbReference>
<dbReference type="GO" id="GO:0008360">
    <property type="term" value="P:regulation of cell shape"/>
    <property type="evidence" value="ECO:0007669"/>
    <property type="project" value="UniProtKB-KW"/>
</dbReference>
<dbReference type="GO" id="GO:0046677">
    <property type="term" value="P:response to antibiotic"/>
    <property type="evidence" value="ECO:0007669"/>
    <property type="project" value="UniProtKB-UniRule"/>
</dbReference>
<dbReference type="HAMAP" id="MF_01006">
    <property type="entry name" value="Undec_diphosphatase"/>
    <property type="match status" value="1"/>
</dbReference>
<dbReference type="InterPro" id="IPR003824">
    <property type="entry name" value="UppP"/>
</dbReference>
<dbReference type="NCBIfam" id="NF001388">
    <property type="entry name" value="PRK00281.1-1"/>
    <property type="match status" value="1"/>
</dbReference>
<dbReference type="NCBIfam" id="NF001389">
    <property type="entry name" value="PRK00281.1-2"/>
    <property type="match status" value="1"/>
</dbReference>
<dbReference type="NCBIfam" id="NF001390">
    <property type="entry name" value="PRK00281.1-4"/>
    <property type="match status" value="1"/>
</dbReference>
<dbReference type="NCBIfam" id="TIGR00753">
    <property type="entry name" value="undec_PP_bacA"/>
    <property type="match status" value="1"/>
</dbReference>
<dbReference type="PANTHER" id="PTHR30622">
    <property type="entry name" value="UNDECAPRENYL-DIPHOSPHATASE"/>
    <property type="match status" value="1"/>
</dbReference>
<dbReference type="PANTHER" id="PTHR30622:SF3">
    <property type="entry name" value="UNDECAPRENYL-DIPHOSPHATASE"/>
    <property type="match status" value="1"/>
</dbReference>
<dbReference type="Pfam" id="PF02673">
    <property type="entry name" value="BacA"/>
    <property type="match status" value="1"/>
</dbReference>
<proteinExistence type="inferred from homology"/>
<reference key="1">
    <citation type="journal article" date="2003" name="Nature">
        <title>The genome sequence of Bacillus anthracis Ames and comparison to closely related bacteria.</title>
        <authorList>
            <person name="Read T.D."/>
            <person name="Peterson S.N."/>
            <person name="Tourasse N.J."/>
            <person name="Baillie L.W."/>
            <person name="Paulsen I.T."/>
            <person name="Nelson K.E."/>
            <person name="Tettelin H."/>
            <person name="Fouts D.E."/>
            <person name="Eisen J.A."/>
            <person name="Gill S.R."/>
            <person name="Holtzapple E.K."/>
            <person name="Okstad O.A."/>
            <person name="Helgason E."/>
            <person name="Rilstone J."/>
            <person name="Wu M."/>
            <person name="Kolonay J.F."/>
            <person name="Beanan M.J."/>
            <person name="Dodson R.J."/>
            <person name="Brinkac L.M."/>
            <person name="Gwinn M.L."/>
            <person name="DeBoy R.T."/>
            <person name="Madpu R."/>
            <person name="Daugherty S.C."/>
            <person name="Durkin A.S."/>
            <person name="Haft D.H."/>
            <person name="Nelson W.C."/>
            <person name="Peterson J.D."/>
            <person name="Pop M."/>
            <person name="Khouri H.M."/>
            <person name="Radune D."/>
            <person name="Benton J.L."/>
            <person name="Mahamoud Y."/>
            <person name="Jiang L."/>
            <person name="Hance I.R."/>
            <person name="Weidman J.F."/>
            <person name="Berry K.J."/>
            <person name="Plaut R.D."/>
            <person name="Wolf A.M."/>
            <person name="Watkins K.L."/>
            <person name="Nierman W.C."/>
            <person name="Hazen A."/>
            <person name="Cline R.T."/>
            <person name="Redmond C."/>
            <person name="Thwaite J.E."/>
            <person name="White O."/>
            <person name="Salzberg S.L."/>
            <person name="Thomason B."/>
            <person name="Friedlander A.M."/>
            <person name="Koehler T.M."/>
            <person name="Hanna P.C."/>
            <person name="Kolstoe A.-B."/>
            <person name="Fraser C.M."/>
        </authorList>
    </citation>
    <scope>NUCLEOTIDE SEQUENCE [LARGE SCALE GENOMIC DNA]</scope>
    <source>
        <strain>Ames / isolate Porton</strain>
    </source>
</reference>
<reference key="2">
    <citation type="journal article" date="2009" name="J. Bacteriol.">
        <title>The complete genome sequence of Bacillus anthracis Ames 'Ancestor'.</title>
        <authorList>
            <person name="Ravel J."/>
            <person name="Jiang L."/>
            <person name="Stanley S.T."/>
            <person name="Wilson M.R."/>
            <person name="Decker R.S."/>
            <person name="Read T.D."/>
            <person name="Worsham P."/>
            <person name="Keim P.S."/>
            <person name="Salzberg S.L."/>
            <person name="Fraser-Liggett C.M."/>
            <person name="Rasko D.A."/>
        </authorList>
    </citation>
    <scope>NUCLEOTIDE SEQUENCE [LARGE SCALE GENOMIC DNA]</scope>
    <source>
        <strain>Ames ancestor</strain>
    </source>
</reference>
<reference key="3">
    <citation type="submission" date="2004-01" db="EMBL/GenBank/DDBJ databases">
        <title>Complete genome sequence of Bacillus anthracis Sterne.</title>
        <authorList>
            <person name="Brettin T.S."/>
            <person name="Bruce D."/>
            <person name="Challacombe J.F."/>
            <person name="Gilna P."/>
            <person name="Han C."/>
            <person name="Hill K."/>
            <person name="Hitchcock P."/>
            <person name="Jackson P."/>
            <person name="Keim P."/>
            <person name="Longmire J."/>
            <person name="Lucas S."/>
            <person name="Okinaka R."/>
            <person name="Richardson P."/>
            <person name="Rubin E."/>
            <person name="Tice H."/>
        </authorList>
    </citation>
    <scope>NUCLEOTIDE SEQUENCE [LARGE SCALE GENOMIC DNA]</scope>
    <source>
        <strain>Sterne</strain>
    </source>
</reference>
<keyword id="KW-0046">Antibiotic resistance</keyword>
<keyword id="KW-1003">Cell membrane</keyword>
<keyword id="KW-0133">Cell shape</keyword>
<keyword id="KW-0961">Cell wall biogenesis/degradation</keyword>
<keyword id="KW-0378">Hydrolase</keyword>
<keyword id="KW-0472">Membrane</keyword>
<keyword id="KW-0573">Peptidoglycan synthesis</keyword>
<keyword id="KW-1185">Reference proteome</keyword>
<keyword id="KW-0812">Transmembrane</keyword>
<keyword id="KW-1133">Transmembrane helix</keyword>
<evidence type="ECO:0000255" key="1">
    <source>
        <dbReference type="HAMAP-Rule" id="MF_01006"/>
    </source>
</evidence>
<evidence type="ECO:0000305" key="2"/>
<accession>Q81T84</accession>
<accession>Q6I1G5</accession>
<accession>Q6KVB2</accession>
<name>UPPP2_BACAN</name>
<sequence length="263" mass="28363">MADWLIGIIMGAVEGLTEFLPVSSTGHMILTGHLIGFDDDRAKVFEVVIQLGSILAVVVIFWKRLWSLVGIGKVTDGPSLNLLHIIIGMIPAGVLGVLFHSAIKEVLFGPGPVVISLVAGGILMIVAEKFSKPSTARTLDEITYKQAFTIGMFQCLALWPGFSRSGSTISGGLLARVSHTAAAEYTFILAVPMMVAASGLDLIKSWDILSTADIPLFATGFITAFVVAMLAIVSFLKLLSRVKLTPFAYYRFILAAVFYFFIM</sequence>
<protein>
    <recommendedName>
        <fullName evidence="1">Undecaprenyl-diphosphatase 2</fullName>
        <ecNumber evidence="1">3.6.1.27</ecNumber>
    </recommendedName>
    <alternativeName>
        <fullName evidence="1">Bacitracin resistance protein 2</fullName>
    </alternativeName>
    <alternativeName>
        <fullName evidence="1">Undecaprenyl pyrophosphate phosphatase 2</fullName>
    </alternativeName>
</protein>
<organism>
    <name type="scientific">Bacillus anthracis</name>
    <dbReference type="NCBI Taxonomy" id="1392"/>
    <lineage>
        <taxon>Bacteria</taxon>
        <taxon>Bacillati</taxon>
        <taxon>Bacillota</taxon>
        <taxon>Bacilli</taxon>
        <taxon>Bacillales</taxon>
        <taxon>Bacillaceae</taxon>
        <taxon>Bacillus</taxon>
        <taxon>Bacillus cereus group</taxon>
    </lineage>
</organism>
<feature type="chain" id="PRO_0000151086" description="Undecaprenyl-diphosphatase 2">
    <location>
        <begin position="1"/>
        <end position="263"/>
    </location>
</feature>
<feature type="transmembrane region" description="Helical" evidence="1">
    <location>
        <begin position="17"/>
        <end position="37"/>
    </location>
</feature>
<feature type="transmembrane region" description="Helical" evidence="1">
    <location>
        <begin position="42"/>
        <end position="62"/>
    </location>
</feature>
<feature type="transmembrane region" description="Helical" evidence="1">
    <location>
        <begin position="83"/>
        <end position="103"/>
    </location>
</feature>
<feature type="transmembrane region" description="Helical" evidence="1">
    <location>
        <begin position="106"/>
        <end position="126"/>
    </location>
</feature>
<feature type="transmembrane region" description="Helical" evidence="1">
    <location>
        <begin position="142"/>
        <end position="162"/>
    </location>
</feature>
<feature type="transmembrane region" description="Helical" evidence="1">
    <location>
        <begin position="183"/>
        <end position="203"/>
    </location>
</feature>
<feature type="transmembrane region" description="Helical" evidence="1">
    <location>
        <begin position="216"/>
        <end position="236"/>
    </location>
</feature>
<feature type="transmembrane region" description="Helical" evidence="1">
    <location>
        <begin position="242"/>
        <end position="262"/>
    </location>
</feature>